<protein>
    <recommendedName>
        <fullName evidence="1">Protein PsbN</fullName>
    </recommendedName>
</protein>
<evidence type="ECO:0000255" key="1">
    <source>
        <dbReference type="HAMAP-Rule" id="MF_00293"/>
    </source>
</evidence>
<dbReference type="EMBL" id="AF469710">
    <property type="protein sequence ID" value="AAQ18545.1"/>
    <property type="molecule type" value="Genomic_DNA"/>
</dbReference>
<dbReference type="RefSeq" id="YP_009154298.1">
    <property type="nucleotide sequence ID" value="NC_027423.1"/>
</dbReference>
<dbReference type="SMR" id="Q71L94"/>
<dbReference type="GeneID" id="24707167"/>
<dbReference type="GO" id="GO:0009535">
    <property type="term" value="C:chloroplast thylakoid membrane"/>
    <property type="evidence" value="ECO:0007669"/>
    <property type="project" value="UniProtKB-SubCell"/>
</dbReference>
<dbReference type="GO" id="GO:0015979">
    <property type="term" value="P:photosynthesis"/>
    <property type="evidence" value="ECO:0007669"/>
    <property type="project" value="InterPro"/>
</dbReference>
<dbReference type="HAMAP" id="MF_00293">
    <property type="entry name" value="PSII_PsbN"/>
    <property type="match status" value="1"/>
</dbReference>
<dbReference type="InterPro" id="IPR003398">
    <property type="entry name" value="PSII_PsbN"/>
</dbReference>
<dbReference type="PANTHER" id="PTHR35326">
    <property type="entry name" value="PROTEIN PSBN"/>
    <property type="match status" value="1"/>
</dbReference>
<dbReference type="PANTHER" id="PTHR35326:SF3">
    <property type="entry name" value="PROTEIN PSBN"/>
    <property type="match status" value="1"/>
</dbReference>
<dbReference type="Pfam" id="PF02468">
    <property type="entry name" value="PsbN"/>
    <property type="match status" value="1"/>
</dbReference>
<geneLocation type="chloroplast"/>
<sequence>METATLVAISISCLLVSFTGYALYTAFGQPSEQLRDPFEEHED</sequence>
<accession>Q71L94</accession>
<reference key="1">
    <citation type="journal article" date="2003" name="Mol. Phylogenet. Evol.">
        <title>Inference of higher-order relationships in the cycads from a large chloroplast data set.</title>
        <authorList>
            <person name="Rai H.S."/>
            <person name="O'Brien H.E."/>
            <person name="Reeves P.A."/>
            <person name="Olmstead R.G."/>
            <person name="Graham S.W."/>
        </authorList>
    </citation>
    <scope>NUCLEOTIDE SEQUENCE [GENOMIC DNA]</scope>
</reference>
<organism>
    <name type="scientific">Metasequoia glyptostroboides</name>
    <name type="common">Dawn redwood</name>
    <name type="synonym">Sequoia glyptostroboides</name>
    <dbReference type="NCBI Taxonomy" id="3371"/>
    <lineage>
        <taxon>Eukaryota</taxon>
        <taxon>Viridiplantae</taxon>
        <taxon>Streptophyta</taxon>
        <taxon>Embryophyta</taxon>
        <taxon>Tracheophyta</taxon>
        <taxon>Spermatophyta</taxon>
        <taxon>Pinopsida</taxon>
        <taxon>Pinidae</taxon>
        <taxon>Conifers II</taxon>
        <taxon>Cupressales</taxon>
        <taxon>Cupressaceae</taxon>
        <taxon>Metasequoia</taxon>
    </lineage>
</organism>
<keyword id="KW-0150">Chloroplast</keyword>
<keyword id="KW-0472">Membrane</keyword>
<keyword id="KW-0934">Plastid</keyword>
<keyword id="KW-0793">Thylakoid</keyword>
<keyword id="KW-0812">Transmembrane</keyword>
<keyword id="KW-1133">Transmembrane helix</keyword>
<proteinExistence type="inferred from homology"/>
<comment type="function">
    <text evidence="1">May play a role in photosystem I and II biogenesis.</text>
</comment>
<comment type="subcellular location">
    <subcellularLocation>
        <location evidence="1">Plastid</location>
        <location evidence="1">Chloroplast thylakoid membrane</location>
        <topology evidence="1">Single-pass membrane protein</topology>
    </subcellularLocation>
</comment>
<comment type="similarity">
    <text evidence="1">Belongs to the PsbN family.</text>
</comment>
<comment type="caution">
    <text evidence="1">Originally thought to be a component of PSII; based on experiments in Synechocystis, N.tabacum and barley, and its absence from PSII in T.elongatus and T.vulcanus, this is probably not true.</text>
</comment>
<gene>
    <name evidence="1" type="primary">psbN</name>
</gene>
<name>PSBN_METGY</name>
<feature type="chain" id="PRO_0000207924" description="Protein PsbN">
    <location>
        <begin position="1"/>
        <end position="43"/>
    </location>
</feature>
<feature type="transmembrane region" description="Helical" evidence="1">
    <location>
        <begin position="5"/>
        <end position="27"/>
    </location>
</feature>